<dbReference type="EC" id="3.6.4.-" evidence="1"/>
<dbReference type="EMBL" id="CP000671">
    <property type="protein sequence ID" value="ABQ97779.1"/>
    <property type="molecule type" value="Genomic_DNA"/>
</dbReference>
<dbReference type="SMR" id="A5UAH8"/>
<dbReference type="KEGG" id="hip:CGSHiEE_01495"/>
<dbReference type="HOGENOM" id="CLU_055599_1_0_6"/>
<dbReference type="GO" id="GO:0005737">
    <property type="term" value="C:cytoplasm"/>
    <property type="evidence" value="ECO:0007669"/>
    <property type="project" value="UniProtKB-SubCell"/>
</dbReference>
<dbReference type="GO" id="GO:0048476">
    <property type="term" value="C:Holliday junction resolvase complex"/>
    <property type="evidence" value="ECO:0007669"/>
    <property type="project" value="UniProtKB-UniRule"/>
</dbReference>
<dbReference type="GO" id="GO:0005524">
    <property type="term" value="F:ATP binding"/>
    <property type="evidence" value="ECO:0007669"/>
    <property type="project" value="UniProtKB-UniRule"/>
</dbReference>
<dbReference type="GO" id="GO:0016887">
    <property type="term" value="F:ATP hydrolysis activity"/>
    <property type="evidence" value="ECO:0007669"/>
    <property type="project" value="InterPro"/>
</dbReference>
<dbReference type="GO" id="GO:0000400">
    <property type="term" value="F:four-way junction DNA binding"/>
    <property type="evidence" value="ECO:0007669"/>
    <property type="project" value="UniProtKB-UniRule"/>
</dbReference>
<dbReference type="GO" id="GO:0009378">
    <property type="term" value="F:four-way junction helicase activity"/>
    <property type="evidence" value="ECO:0007669"/>
    <property type="project" value="InterPro"/>
</dbReference>
<dbReference type="GO" id="GO:0006310">
    <property type="term" value="P:DNA recombination"/>
    <property type="evidence" value="ECO:0007669"/>
    <property type="project" value="UniProtKB-UniRule"/>
</dbReference>
<dbReference type="GO" id="GO:0006281">
    <property type="term" value="P:DNA repair"/>
    <property type="evidence" value="ECO:0007669"/>
    <property type="project" value="UniProtKB-UniRule"/>
</dbReference>
<dbReference type="CDD" id="cd00009">
    <property type="entry name" value="AAA"/>
    <property type="match status" value="1"/>
</dbReference>
<dbReference type="FunFam" id="1.10.10.10:FF:000086">
    <property type="entry name" value="Holliday junction ATP-dependent DNA helicase RuvB"/>
    <property type="match status" value="1"/>
</dbReference>
<dbReference type="FunFam" id="1.10.8.60:FF:000023">
    <property type="entry name" value="Holliday junction ATP-dependent DNA helicase RuvB"/>
    <property type="match status" value="1"/>
</dbReference>
<dbReference type="FunFam" id="3.40.50.300:FF:000073">
    <property type="entry name" value="Holliday junction ATP-dependent DNA helicase RuvB"/>
    <property type="match status" value="1"/>
</dbReference>
<dbReference type="Gene3D" id="1.10.8.60">
    <property type="match status" value="1"/>
</dbReference>
<dbReference type="Gene3D" id="3.40.50.300">
    <property type="entry name" value="P-loop containing nucleotide triphosphate hydrolases"/>
    <property type="match status" value="1"/>
</dbReference>
<dbReference type="Gene3D" id="1.10.10.10">
    <property type="entry name" value="Winged helix-like DNA-binding domain superfamily/Winged helix DNA-binding domain"/>
    <property type="match status" value="1"/>
</dbReference>
<dbReference type="HAMAP" id="MF_00016">
    <property type="entry name" value="DNA_HJ_migration_RuvB"/>
    <property type="match status" value="1"/>
</dbReference>
<dbReference type="InterPro" id="IPR003593">
    <property type="entry name" value="AAA+_ATPase"/>
</dbReference>
<dbReference type="InterPro" id="IPR041445">
    <property type="entry name" value="AAA_lid_4"/>
</dbReference>
<dbReference type="InterPro" id="IPR004605">
    <property type="entry name" value="DNA_helicase_Holl-junc_RuvB"/>
</dbReference>
<dbReference type="InterPro" id="IPR027417">
    <property type="entry name" value="P-loop_NTPase"/>
</dbReference>
<dbReference type="InterPro" id="IPR008824">
    <property type="entry name" value="RuvB-like_N"/>
</dbReference>
<dbReference type="InterPro" id="IPR008823">
    <property type="entry name" value="RuvB_C"/>
</dbReference>
<dbReference type="InterPro" id="IPR036388">
    <property type="entry name" value="WH-like_DNA-bd_sf"/>
</dbReference>
<dbReference type="InterPro" id="IPR036390">
    <property type="entry name" value="WH_DNA-bd_sf"/>
</dbReference>
<dbReference type="NCBIfam" id="NF000868">
    <property type="entry name" value="PRK00080.1"/>
    <property type="match status" value="1"/>
</dbReference>
<dbReference type="NCBIfam" id="TIGR00635">
    <property type="entry name" value="ruvB"/>
    <property type="match status" value="1"/>
</dbReference>
<dbReference type="PANTHER" id="PTHR42848">
    <property type="match status" value="1"/>
</dbReference>
<dbReference type="PANTHER" id="PTHR42848:SF1">
    <property type="entry name" value="HOLLIDAY JUNCTION BRANCH MIGRATION COMPLEX SUBUNIT RUVB"/>
    <property type="match status" value="1"/>
</dbReference>
<dbReference type="Pfam" id="PF17864">
    <property type="entry name" value="AAA_lid_4"/>
    <property type="match status" value="1"/>
</dbReference>
<dbReference type="Pfam" id="PF05491">
    <property type="entry name" value="RuvB_C"/>
    <property type="match status" value="1"/>
</dbReference>
<dbReference type="Pfam" id="PF05496">
    <property type="entry name" value="RuvB_N"/>
    <property type="match status" value="1"/>
</dbReference>
<dbReference type="SMART" id="SM00382">
    <property type="entry name" value="AAA"/>
    <property type="match status" value="1"/>
</dbReference>
<dbReference type="SUPFAM" id="SSF52540">
    <property type="entry name" value="P-loop containing nucleoside triphosphate hydrolases"/>
    <property type="match status" value="1"/>
</dbReference>
<dbReference type="SUPFAM" id="SSF46785">
    <property type="entry name" value="Winged helix' DNA-binding domain"/>
    <property type="match status" value="1"/>
</dbReference>
<evidence type="ECO:0000255" key="1">
    <source>
        <dbReference type="HAMAP-Rule" id="MF_00016"/>
    </source>
</evidence>
<reference key="1">
    <citation type="journal article" date="2007" name="Genome Biol.">
        <title>Characterization and modeling of the Haemophilus influenzae core and supragenomes based on the complete genomic sequences of Rd and 12 clinical nontypeable strains.</title>
        <authorList>
            <person name="Hogg J.S."/>
            <person name="Hu F.Z."/>
            <person name="Janto B."/>
            <person name="Boissy R."/>
            <person name="Hayes J."/>
            <person name="Keefe R."/>
            <person name="Post J.C."/>
            <person name="Ehrlich G.D."/>
        </authorList>
    </citation>
    <scope>NUCLEOTIDE SEQUENCE [LARGE SCALE GENOMIC DNA]</scope>
    <source>
        <strain>PittEE</strain>
    </source>
</reference>
<protein>
    <recommendedName>
        <fullName evidence="1">Holliday junction branch migration complex subunit RuvB</fullName>
        <ecNumber evidence="1">3.6.4.-</ecNumber>
    </recommendedName>
</protein>
<keyword id="KW-0067">ATP-binding</keyword>
<keyword id="KW-0963">Cytoplasm</keyword>
<keyword id="KW-0227">DNA damage</keyword>
<keyword id="KW-0233">DNA recombination</keyword>
<keyword id="KW-0234">DNA repair</keyword>
<keyword id="KW-0238">DNA-binding</keyword>
<keyword id="KW-0378">Hydrolase</keyword>
<keyword id="KW-0547">Nucleotide-binding</keyword>
<organism>
    <name type="scientific">Haemophilus influenzae (strain PittEE)</name>
    <dbReference type="NCBI Taxonomy" id="374930"/>
    <lineage>
        <taxon>Bacteria</taxon>
        <taxon>Pseudomonadati</taxon>
        <taxon>Pseudomonadota</taxon>
        <taxon>Gammaproteobacteria</taxon>
        <taxon>Pasteurellales</taxon>
        <taxon>Pasteurellaceae</taxon>
        <taxon>Haemophilus</taxon>
    </lineage>
</organism>
<comment type="function">
    <text evidence="1">The RuvA-RuvB-RuvC complex processes Holliday junction (HJ) DNA during genetic recombination and DNA repair, while the RuvA-RuvB complex plays an important role in the rescue of blocked DNA replication forks via replication fork reversal (RFR). RuvA specifically binds to HJ cruciform DNA, conferring on it an open structure. The RuvB hexamer acts as an ATP-dependent pump, pulling dsDNA into and through the RuvAB complex. RuvB forms 2 homohexamers on either side of HJ DNA bound by 1 or 2 RuvA tetramers; 4 subunits per hexamer contact DNA at a time. Coordinated motions by a converter formed by DNA-disengaged RuvB subunits stimulates ATP hydrolysis and nucleotide exchange. Immobilization of the converter enables RuvB to convert the ATP-contained energy into a lever motion, pulling 2 nucleotides of DNA out of the RuvA tetramer per ATP hydrolyzed, thus driving DNA branch migration. The RuvB motors rotate together with the DNA substrate, which together with the progressing nucleotide cycle form the mechanistic basis for DNA recombination by continuous HJ branch migration. Branch migration allows RuvC to scan DNA until it finds its consensus sequence, where it cleaves and resolves cruciform DNA.</text>
</comment>
<comment type="catalytic activity">
    <reaction evidence="1">
        <text>ATP + H2O = ADP + phosphate + H(+)</text>
        <dbReference type="Rhea" id="RHEA:13065"/>
        <dbReference type="ChEBI" id="CHEBI:15377"/>
        <dbReference type="ChEBI" id="CHEBI:15378"/>
        <dbReference type="ChEBI" id="CHEBI:30616"/>
        <dbReference type="ChEBI" id="CHEBI:43474"/>
        <dbReference type="ChEBI" id="CHEBI:456216"/>
    </reaction>
</comment>
<comment type="subunit">
    <text evidence="1">Homohexamer. Forms an RuvA(8)-RuvB(12)-Holliday junction (HJ) complex. HJ DNA is sandwiched between 2 RuvA tetramers; dsDNA enters through RuvA and exits via RuvB. An RuvB hexamer assembles on each DNA strand where it exits the tetramer. Each RuvB hexamer is contacted by two RuvA subunits (via domain III) on 2 adjacent RuvB subunits; this complex drives branch migration. In the full resolvosome a probable DNA-RuvA(4)-RuvB(12)-RuvC(2) complex forms which resolves the HJ.</text>
</comment>
<comment type="subcellular location">
    <subcellularLocation>
        <location evidence="1">Cytoplasm</location>
    </subcellularLocation>
</comment>
<comment type="domain">
    <text evidence="1">Has 3 domains, the large (RuvB-L) and small ATPase (RuvB-S) domains and the C-terminal head (RuvB-H) domain. The head domain binds DNA, while the ATPase domains jointly bind ATP, ADP or are empty depending on the state of the subunit in the translocation cycle. During a single DNA translocation step the structure of each domain remains the same, but their relative positions change.</text>
</comment>
<comment type="similarity">
    <text evidence="1">Belongs to the RuvB family.</text>
</comment>
<name>RUVB_HAEIE</name>
<sequence>MIEADRIISGQAKVDEDVIDRAIRPKLLADYVGQPQVREQMDIFIKAAKLRQDALDHLLIFGPPGLGKTTLANIVANEMGVNIRTTSGPVLEKAGDLAAMLTNLEPHDVLFIDEIHRLSPAIEEVLYPAMEDYQLDIMIGEGPAARSIKLDLPPFTLVGATTRAGSLTSPLRDRFGIVQRLEFYSVEDLTSIVARSAGCLNLELEQQAAFEVARRSRGTPRIANRLLRRVRDYADVRNGGVISVDVAKQALSMLDVDDAGFDYLDRKLLSAVIERFDGGPVGLDNLAAAIGEERDTIEDVLEPYLIQQGFLQRTPRGRIATSKTYRHFGLQKLSD</sequence>
<gene>
    <name evidence="1" type="primary">ruvB</name>
    <name type="ordered locus">CGSHiEE_01495</name>
</gene>
<feature type="chain" id="PRO_1000001413" description="Holliday junction branch migration complex subunit RuvB">
    <location>
        <begin position="1"/>
        <end position="335"/>
    </location>
</feature>
<feature type="region of interest" description="Large ATPase domain (RuvB-L)" evidence="1">
    <location>
        <begin position="4"/>
        <end position="184"/>
    </location>
</feature>
<feature type="region of interest" description="Small ATPAse domain (RuvB-S)" evidence="1">
    <location>
        <begin position="185"/>
        <end position="255"/>
    </location>
</feature>
<feature type="region of interest" description="Head domain (RuvB-H)" evidence="1">
    <location>
        <begin position="258"/>
        <end position="335"/>
    </location>
</feature>
<feature type="binding site" evidence="1">
    <location>
        <position position="23"/>
    </location>
    <ligand>
        <name>ATP</name>
        <dbReference type="ChEBI" id="CHEBI:30616"/>
    </ligand>
</feature>
<feature type="binding site" evidence="1">
    <location>
        <position position="24"/>
    </location>
    <ligand>
        <name>ATP</name>
        <dbReference type="ChEBI" id="CHEBI:30616"/>
    </ligand>
</feature>
<feature type="binding site" evidence="1">
    <location>
        <position position="65"/>
    </location>
    <ligand>
        <name>ATP</name>
        <dbReference type="ChEBI" id="CHEBI:30616"/>
    </ligand>
</feature>
<feature type="binding site" evidence="1">
    <location>
        <position position="68"/>
    </location>
    <ligand>
        <name>ATP</name>
        <dbReference type="ChEBI" id="CHEBI:30616"/>
    </ligand>
</feature>
<feature type="binding site" evidence="1">
    <location>
        <position position="69"/>
    </location>
    <ligand>
        <name>ATP</name>
        <dbReference type="ChEBI" id="CHEBI:30616"/>
    </ligand>
</feature>
<feature type="binding site" evidence="1">
    <location>
        <position position="69"/>
    </location>
    <ligand>
        <name>Mg(2+)</name>
        <dbReference type="ChEBI" id="CHEBI:18420"/>
    </ligand>
</feature>
<feature type="binding site" evidence="1">
    <location>
        <position position="70"/>
    </location>
    <ligand>
        <name>ATP</name>
        <dbReference type="ChEBI" id="CHEBI:30616"/>
    </ligand>
</feature>
<feature type="binding site" evidence="1">
    <location>
        <begin position="131"/>
        <end position="133"/>
    </location>
    <ligand>
        <name>ATP</name>
        <dbReference type="ChEBI" id="CHEBI:30616"/>
    </ligand>
</feature>
<feature type="binding site" evidence="1">
    <location>
        <position position="174"/>
    </location>
    <ligand>
        <name>ATP</name>
        <dbReference type="ChEBI" id="CHEBI:30616"/>
    </ligand>
</feature>
<feature type="binding site" evidence="1">
    <location>
        <position position="184"/>
    </location>
    <ligand>
        <name>ATP</name>
        <dbReference type="ChEBI" id="CHEBI:30616"/>
    </ligand>
</feature>
<feature type="binding site" evidence="1">
    <location>
        <position position="221"/>
    </location>
    <ligand>
        <name>ATP</name>
        <dbReference type="ChEBI" id="CHEBI:30616"/>
    </ligand>
</feature>
<feature type="binding site" evidence="1">
    <location>
        <position position="294"/>
    </location>
    <ligand>
        <name>DNA</name>
        <dbReference type="ChEBI" id="CHEBI:16991"/>
    </ligand>
</feature>
<feature type="binding site" evidence="1">
    <location>
        <position position="313"/>
    </location>
    <ligand>
        <name>DNA</name>
        <dbReference type="ChEBI" id="CHEBI:16991"/>
    </ligand>
</feature>
<feature type="binding site" evidence="1">
    <location>
        <position position="318"/>
    </location>
    <ligand>
        <name>DNA</name>
        <dbReference type="ChEBI" id="CHEBI:16991"/>
    </ligand>
</feature>
<proteinExistence type="inferred from homology"/>
<accession>A5UAH8</accession>